<dbReference type="EMBL" id="U92524">
    <property type="protein sequence ID" value="AAC45774.1"/>
    <property type="molecule type" value="Genomic_DNA"/>
</dbReference>
<dbReference type="EMBL" id="AE006468">
    <property type="protein sequence ID" value="AAL21919.1"/>
    <property type="molecule type" value="Genomic_DNA"/>
</dbReference>
<dbReference type="RefSeq" id="NP_461960.1">
    <property type="nucleotide sequence ID" value="NC_003197.2"/>
</dbReference>
<dbReference type="RefSeq" id="WP_000434302.1">
    <property type="nucleotide sequence ID" value="NC_003197.2"/>
</dbReference>
<dbReference type="SMR" id="P0A2P6"/>
<dbReference type="STRING" id="99287.STM3044"/>
<dbReference type="PaxDb" id="99287-STM3044"/>
<dbReference type="GeneID" id="1254567"/>
<dbReference type="KEGG" id="stm:STM3044"/>
<dbReference type="PATRIC" id="fig|99287.12.peg.3224"/>
<dbReference type="HOGENOM" id="CLU_027562_9_0_6"/>
<dbReference type="OMA" id="FWYLIKR"/>
<dbReference type="PhylomeDB" id="P0A2P6"/>
<dbReference type="BioCyc" id="SENT99287:STM3044-MONOMER"/>
<dbReference type="Proteomes" id="UP000001014">
    <property type="component" value="Chromosome"/>
</dbReference>
<dbReference type="GO" id="GO:0005737">
    <property type="term" value="C:cytoplasm"/>
    <property type="evidence" value="ECO:0007669"/>
    <property type="project" value="UniProtKB-SubCell"/>
</dbReference>
<dbReference type="GO" id="GO:0048476">
    <property type="term" value="C:Holliday junction resolvase complex"/>
    <property type="evidence" value="ECO:0000318"/>
    <property type="project" value="GO_Central"/>
</dbReference>
<dbReference type="GO" id="GO:0003677">
    <property type="term" value="F:DNA binding"/>
    <property type="evidence" value="ECO:0000318"/>
    <property type="project" value="GO_Central"/>
</dbReference>
<dbReference type="GO" id="GO:0009037">
    <property type="term" value="F:tyrosine-based site-specific recombinase activity"/>
    <property type="evidence" value="ECO:0000318"/>
    <property type="project" value="GO_Central"/>
</dbReference>
<dbReference type="GO" id="GO:0051301">
    <property type="term" value="P:cell division"/>
    <property type="evidence" value="ECO:0007669"/>
    <property type="project" value="UniProtKB-KW"/>
</dbReference>
<dbReference type="GO" id="GO:0007059">
    <property type="term" value="P:chromosome segregation"/>
    <property type="evidence" value="ECO:0000318"/>
    <property type="project" value="GO_Central"/>
</dbReference>
<dbReference type="GO" id="GO:0006310">
    <property type="term" value="P:DNA recombination"/>
    <property type="evidence" value="ECO:0000318"/>
    <property type="project" value="GO_Central"/>
</dbReference>
<dbReference type="GO" id="GO:0006313">
    <property type="term" value="P:DNA transposition"/>
    <property type="evidence" value="ECO:0007669"/>
    <property type="project" value="UniProtKB-UniRule"/>
</dbReference>
<dbReference type="GO" id="GO:0071139">
    <property type="term" value="P:resolution of DNA recombination intermediates"/>
    <property type="evidence" value="ECO:0000318"/>
    <property type="project" value="GO_Central"/>
</dbReference>
<dbReference type="CDD" id="cd00798">
    <property type="entry name" value="INT_XerDC_C"/>
    <property type="match status" value="1"/>
</dbReference>
<dbReference type="FunFam" id="1.10.150.130:FF:000002">
    <property type="entry name" value="Tyrosine recombinase XerD"/>
    <property type="match status" value="1"/>
</dbReference>
<dbReference type="FunFam" id="1.10.443.10:FF:000001">
    <property type="entry name" value="Tyrosine recombinase XerD"/>
    <property type="match status" value="1"/>
</dbReference>
<dbReference type="Gene3D" id="1.10.150.130">
    <property type="match status" value="1"/>
</dbReference>
<dbReference type="Gene3D" id="1.10.443.10">
    <property type="entry name" value="Intergrase catalytic core"/>
    <property type="match status" value="1"/>
</dbReference>
<dbReference type="HAMAP" id="MF_01808">
    <property type="entry name" value="Recomb_XerC_XerD"/>
    <property type="match status" value="1"/>
</dbReference>
<dbReference type="HAMAP" id="MF_01807">
    <property type="entry name" value="Recomb_XerD"/>
    <property type="match status" value="1"/>
</dbReference>
<dbReference type="InterPro" id="IPR044068">
    <property type="entry name" value="CB"/>
</dbReference>
<dbReference type="InterPro" id="IPR011010">
    <property type="entry name" value="DNA_brk_join_enz"/>
</dbReference>
<dbReference type="InterPro" id="IPR013762">
    <property type="entry name" value="Integrase-like_cat_sf"/>
</dbReference>
<dbReference type="InterPro" id="IPR002104">
    <property type="entry name" value="Integrase_catalytic"/>
</dbReference>
<dbReference type="InterPro" id="IPR010998">
    <property type="entry name" value="Integrase_recombinase_N"/>
</dbReference>
<dbReference type="InterPro" id="IPR004107">
    <property type="entry name" value="Integrase_SAM-like_N"/>
</dbReference>
<dbReference type="InterPro" id="IPR011932">
    <property type="entry name" value="Recomb_XerD"/>
</dbReference>
<dbReference type="InterPro" id="IPR023009">
    <property type="entry name" value="Tyrosine_recombinase_XerC/XerD"/>
</dbReference>
<dbReference type="InterPro" id="IPR050090">
    <property type="entry name" value="Tyrosine_recombinase_XerCD"/>
</dbReference>
<dbReference type="NCBIfam" id="NF001399">
    <property type="entry name" value="PRK00283.1"/>
    <property type="match status" value="1"/>
</dbReference>
<dbReference type="NCBIfam" id="NF040815">
    <property type="entry name" value="recomb_XerA_Arch"/>
    <property type="match status" value="1"/>
</dbReference>
<dbReference type="NCBIfam" id="TIGR02225">
    <property type="entry name" value="recomb_XerD"/>
    <property type="match status" value="1"/>
</dbReference>
<dbReference type="PANTHER" id="PTHR30349">
    <property type="entry name" value="PHAGE INTEGRASE-RELATED"/>
    <property type="match status" value="1"/>
</dbReference>
<dbReference type="PANTHER" id="PTHR30349:SF90">
    <property type="entry name" value="TYROSINE RECOMBINASE XERD"/>
    <property type="match status" value="1"/>
</dbReference>
<dbReference type="Pfam" id="PF02899">
    <property type="entry name" value="Phage_int_SAM_1"/>
    <property type="match status" value="1"/>
</dbReference>
<dbReference type="Pfam" id="PF00589">
    <property type="entry name" value="Phage_integrase"/>
    <property type="match status" value="1"/>
</dbReference>
<dbReference type="SUPFAM" id="SSF56349">
    <property type="entry name" value="DNA breaking-rejoining enzymes"/>
    <property type="match status" value="1"/>
</dbReference>
<dbReference type="SUPFAM" id="SSF47823">
    <property type="entry name" value="lambda integrase-like, N-terminal domain"/>
    <property type="match status" value="1"/>
</dbReference>
<dbReference type="PROSITE" id="PS51900">
    <property type="entry name" value="CB"/>
    <property type="match status" value="1"/>
</dbReference>
<dbReference type="PROSITE" id="PS51898">
    <property type="entry name" value="TYR_RECOMBINASE"/>
    <property type="match status" value="1"/>
</dbReference>
<accession>P0A2P6</accession>
<accession>P55889</accession>
<protein>
    <recommendedName>
        <fullName>Tyrosine recombinase XerD</fullName>
    </recommendedName>
</protein>
<comment type="function">
    <text evidence="1 4">Site-specific tyrosine recombinase, which acts by catalyzing the cutting and rejoining of the recombining DNA molecules. Binds cooperatively to specific DNA consensus sequences that are separated from XerC binding sites by a short central region, forming the heterotetrameric XerC-XerD complex that recombines DNA substrates. The complex is essential to convert dimers of the bacterial chromosome into monomers to permit their segregation at cell division. It also contributes to the segregational stability of plasmids. In the complex XerD specifically exchanges the bottom DNA strands (By similarity).</text>
</comment>
<comment type="activity regulation">
    <text evidence="1">FtsK may regulate the catalytic switch between XerC and XerD in the heterotetrameric complex during the two steps of the recombination process.</text>
</comment>
<comment type="subunit">
    <text evidence="1">Forms a cyclic heterotetrameric complex composed of two molecules of XerC and two molecules of XerD, in which XerC interacts with XerD via its C-terminal region, XerD interacts with XerC via its C-terminal region and so on.</text>
</comment>
<comment type="subcellular location">
    <subcellularLocation>
        <location evidence="1">Cytoplasm</location>
    </subcellularLocation>
</comment>
<comment type="similarity">
    <text evidence="5">Belongs to the 'phage' integrase family. XerD subfamily.</text>
</comment>
<reference key="1">
    <citation type="journal article" date="1997" name="Gene">
        <title>Salmonella typhimurium specifies a circular chromosome dimer resolution system which is homologous to the Xer site-specific recombination system of Escherichia coli.</title>
        <authorList>
            <person name="Hayes F."/>
            <person name="Lubetzki S.A."/>
            <person name="Sherratt D.J."/>
        </authorList>
    </citation>
    <scope>NUCLEOTIDE SEQUENCE [GENOMIC DNA]</scope>
    <source>
        <strain>LT2</strain>
    </source>
</reference>
<reference key="2">
    <citation type="journal article" date="2001" name="Nature">
        <title>Complete genome sequence of Salmonella enterica serovar Typhimurium LT2.</title>
        <authorList>
            <person name="McClelland M."/>
            <person name="Sanderson K.E."/>
            <person name="Spieth J."/>
            <person name="Clifton S.W."/>
            <person name="Latreille P."/>
            <person name="Courtney L."/>
            <person name="Porwollik S."/>
            <person name="Ali J."/>
            <person name="Dante M."/>
            <person name="Du F."/>
            <person name="Hou S."/>
            <person name="Layman D."/>
            <person name="Leonard S."/>
            <person name="Nguyen C."/>
            <person name="Scott K."/>
            <person name="Holmes A."/>
            <person name="Grewal N."/>
            <person name="Mulvaney E."/>
            <person name="Ryan E."/>
            <person name="Sun H."/>
            <person name="Florea L."/>
            <person name="Miller W."/>
            <person name="Stoneking T."/>
            <person name="Nhan M."/>
            <person name="Waterston R."/>
            <person name="Wilson R.K."/>
        </authorList>
    </citation>
    <scope>NUCLEOTIDE SEQUENCE [LARGE SCALE GENOMIC DNA]</scope>
    <source>
        <strain>LT2 / SGSC1412 / ATCC 700720</strain>
    </source>
</reference>
<reference key="3">
    <citation type="journal article" date="1999" name="J. Mol. Biol.">
        <title>A newly identified, essential catalytic residue in a critical secondary structure element in the integrase family of site-specific recombinases is conserved in a similar element in eucaryotic type IB topoisomerases.</title>
        <authorList>
            <person name="Cao Y."/>
            <person name="Hayes F."/>
        </authorList>
    </citation>
    <scope>FUNCTION</scope>
    <scope>MUTAGENESIS OF GLY-171; LYS-172; ARG-177; GLY-182 AND ALA-185</scope>
</reference>
<keyword id="KW-0131">Cell cycle</keyword>
<keyword id="KW-0132">Cell division</keyword>
<keyword id="KW-0159">Chromosome partition</keyword>
<keyword id="KW-0963">Cytoplasm</keyword>
<keyword id="KW-0229">DNA integration</keyword>
<keyword id="KW-0233">DNA recombination</keyword>
<keyword id="KW-0238">DNA-binding</keyword>
<keyword id="KW-1185">Reference proteome</keyword>
<name>XERD_SALTY</name>
<gene>
    <name type="primary">xerD</name>
    <name type="ordered locus">STM3044</name>
</gene>
<organism>
    <name type="scientific">Salmonella typhimurium (strain LT2 / SGSC1412 / ATCC 700720)</name>
    <dbReference type="NCBI Taxonomy" id="99287"/>
    <lineage>
        <taxon>Bacteria</taxon>
        <taxon>Pseudomonadati</taxon>
        <taxon>Pseudomonadota</taxon>
        <taxon>Gammaproteobacteria</taxon>
        <taxon>Enterobacterales</taxon>
        <taxon>Enterobacteriaceae</taxon>
        <taxon>Salmonella</taxon>
    </lineage>
</organism>
<proteinExistence type="evidence at protein level"/>
<sequence length="298" mass="34220">MEQDLARIEQFLDALWLERNLAENTLSAYRRDLSMVVAWLHHRGKTLATAQADDLQTLLAERVEGGYKATSSARLLSAMRRFFQHLYREKYREDDPSAQLASPKLPQRLPKDLSEAQVERLLQAPLIDQPLELRDKAMLEVLYATGLRVSELVGLTMSDISLRQGVVRVIGKGNKERLVPLGEEAVYWLETYLEHGRPWLLNGVSIDVLFPSQRAQQMTRQTFWHRIKHYAVLAGIDSEKLSPHVLRHAFATHLLNHGADLRVVQMLLGHSDLSTTQIYTHVATERLRQLHQQHHPRA</sequence>
<feature type="chain" id="PRO_0000095413" description="Tyrosine recombinase XerD">
    <location>
        <begin position="1"/>
        <end position="298"/>
    </location>
</feature>
<feature type="domain" description="Core-binding (CB)" evidence="3">
    <location>
        <begin position="2"/>
        <end position="87"/>
    </location>
</feature>
<feature type="domain" description="Tyr recombinase" evidence="2">
    <location>
        <begin position="108"/>
        <end position="292"/>
    </location>
</feature>
<feature type="active site" evidence="2">
    <location>
        <position position="148"/>
    </location>
</feature>
<feature type="active site" evidence="2">
    <location>
        <position position="172"/>
    </location>
</feature>
<feature type="active site" evidence="2">
    <location>
        <position position="244"/>
    </location>
</feature>
<feature type="active site" evidence="2">
    <location>
        <position position="247"/>
    </location>
</feature>
<feature type="active site" evidence="2">
    <location>
        <position position="270"/>
    </location>
</feature>
<feature type="active site" description="O-(3'-phospho-DNA)-tyrosine intermediate" evidence="2">
    <location>
        <position position="279"/>
    </location>
</feature>
<feature type="mutagenesis site" description="No effect." evidence="4">
    <original>G</original>
    <variation>A</variation>
    <location>
        <position position="171"/>
    </location>
</feature>
<feature type="mutagenesis site" description="Abolishes recombinase activity." evidence="4">
    <original>G</original>
    <variation>W</variation>
    <location>
        <position position="171"/>
    </location>
</feature>
<feature type="mutagenesis site" description="Abolishes recombinase activity." evidence="4">
    <original>K</original>
    <variation>A</variation>
    <location>
        <position position="172"/>
    </location>
</feature>
<feature type="mutagenesis site" description="Abolishes plasmid resolution but not chromosomal recombination." evidence="4">
    <original>R</original>
    <variation>A</variation>
    <location>
        <position position="177"/>
    </location>
</feature>
<feature type="mutagenesis site" description="Abolishes plasmid resolution but not chromosomal recombination.">
    <original>P</original>
    <variation>W</variation>
    <location>
        <position position="180"/>
    </location>
</feature>
<feature type="mutagenesis site" description="Abolishes plasmid resolution but not chromosomal recombination." evidence="4">
    <original>G</original>
    <variation>A</variation>
    <variation>W</variation>
    <location>
        <position position="182"/>
    </location>
</feature>
<feature type="mutagenesis site" description="Abolishes plasmid resolution but not chromosomal recombination." evidence="4">
    <original>A</original>
    <variation>V</variation>
    <location>
        <position position="185"/>
    </location>
</feature>
<feature type="sequence conflict" description="In Ref. 1; AAC45774." evidence="5" ref="1">
    <original>S</original>
    <variation>T</variation>
    <location>
        <position position="71"/>
    </location>
</feature>
<feature type="sequence conflict" description="In Ref. 1; AAC45774." evidence="5" ref="1">
    <original>Q</original>
    <variation>E</variation>
    <location>
        <position position="292"/>
    </location>
</feature>
<evidence type="ECO:0000250" key="1"/>
<evidence type="ECO:0000255" key="2">
    <source>
        <dbReference type="PROSITE-ProRule" id="PRU01246"/>
    </source>
</evidence>
<evidence type="ECO:0000255" key="3">
    <source>
        <dbReference type="PROSITE-ProRule" id="PRU01248"/>
    </source>
</evidence>
<evidence type="ECO:0000269" key="4">
    <source>
    </source>
</evidence>
<evidence type="ECO:0000305" key="5"/>